<reference key="1">
    <citation type="journal article" date="2005" name="Proc. Natl. Acad. Sci. U.S.A.">
        <title>The genome of Salinibacter ruber: convergence and gene exchange among hyperhalophilic bacteria and archaea.</title>
        <authorList>
            <person name="Mongodin E.F."/>
            <person name="Nelson K.E."/>
            <person name="Daugherty S."/>
            <person name="DeBoy R.T."/>
            <person name="Wister J."/>
            <person name="Khouri H."/>
            <person name="Weidman J."/>
            <person name="Walsh D.A."/>
            <person name="Papke R.T."/>
            <person name="Sanchez Perez G."/>
            <person name="Sharma A.K."/>
            <person name="Nesbo C.L."/>
            <person name="MacLeod D."/>
            <person name="Bapteste E."/>
            <person name="Doolittle W.F."/>
            <person name="Charlebois R.L."/>
            <person name="Legault B."/>
            <person name="Rodriguez-Valera F."/>
        </authorList>
    </citation>
    <scope>NUCLEOTIDE SEQUENCE [LARGE SCALE GENOMIC DNA]</scope>
    <source>
        <strain>DSM 13855 / CECT 5946 / M31</strain>
    </source>
</reference>
<accession>Q2S233</accession>
<comment type="function">
    <text evidence="1">An accessory protein needed during the final step in the assembly of 30S ribosomal subunit, possibly for assembly of the head region. Essential for efficient processing of 16S rRNA. May be needed both before and after RbfA during the maturation of 16S rRNA. It has affinity for free ribosomal 30S subunits but not for 70S ribosomes.</text>
</comment>
<comment type="subunit">
    <text evidence="1">Binds ribosomal protein uS19.</text>
</comment>
<comment type="subcellular location">
    <subcellularLocation>
        <location evidence="1">Cytoplasm</location>
    </subcellularLocation>
</comment>
<comment type="domain">
    <text evidence="1">The PRC barrel domain binds ribosomal protein uS19.</text>
</comment>
<comment type="similarity">
    <text evidence="1">Belongs to the RimM family.</text>
</comment>
<protein>
    <recommendedName>
        <fullName evidence="1">Ribosome maturation factor RimM</fullName>
    </recommendedName>
</protein>
<name>RIMM_SALRD</name>
<sequence>MPPPTASTPDDSADPGPDFADVPPTDLVKVGFIFRPHGLDGELKIDPSATDDPARFEVLPTVFVGPHPRRVVRHDIASVRYQKTKRGITVILGLDGIVDRDDAEAVAKMDVFATEAALGLEDDELFADDLVGWTVVTEEGAVQGTVADFMEMPAQDLFVVRTPEDTEAMIPAIDDFIIEIDEEAERIVVRPIDGLMDA</sequence>
<proteinExistence type="inferred from homology"/>
<organism>
    <name type="scientific">Salinibacter ruber (strain DSM 13855 / M31)</name>
    <dbReference type="NCBI Taxonomy" id="309807"/>
    <lineage>
        <taxon>Bacteria</taxon>
        <taxon>Pseudomonadati</taxon>
        <taxon>Rhodothermota</taxon>
        <taxon>Rhodothermia</taxon>
        <taxon>Rhodothermales</taxon>
        <taxon>Salinibacteraceae</taxon>
        <taxon>Salinibacter</taxon>
    </lineage>
</organism>
<evidence type="ECO:0000255" key="1">
    <source>
        <dbReference type="HAMAP-Rule" id="MF_00014"/>
    </source>
</evidence>
<evidence type="ECO:0000256" key="2">
    <source>
        <dbReference type="SAM" id="MobiDB-lite"/>
    </source>
</evidence>
<feature type="chain" id="PRO_0000244164" description="Ribosome maturation factor RimM">
    <location>
        <begin position="1"/>
        <end position="198"/>
    </location>
</feature>
<feature type="domain" description="PRC barrel" evidence="1">
    <location>
        <begin position="122"/>
        <end position="195"/>
    </location>
</feature>
<feature type="region of interest" description="Disordered" evidence="2">
    <location>
        <begin position="1"/>
        <end position="21"/>
    </location>
</feature>
<keyword id="KW-0143">Chaperone</keyword>
<keyword id="KW-0963">Cytoplasm</keyword>
<keyword id="KW-1185">Reference proteome</keyword>
<keyword id="KW-0690">Ribosome biogenesis</keyword>
<keyword id="KW-0698">rRNA processing</keyword>
<gene>
    <name evidence="1" type="primary">rimM</name>
    <name type="ordered locus">SRU_1628</name>
</gene>
<dbReference type="EMBL" id="CP000159">
    <property type="protein sequence ID" value="ABC44360.1"/>
    <property type="molecule type" value="Genomic_DNA"/>
</dbReference>
<dbReference type="RefSeq" id="WP_011404374.1">
    <property type="nucleotide sequence ID" value="NC_007677.1"/>
</dbReference>
<dbReference type="RefSeq" id="YP_445748.1">
    <property type="nucleotide sequence ID" value="NC_007677.1"/>
</dbReference>
<dbReference type="SMR" id="Q2S233"/>
<dbReference type="STRING" id="309807.SRU_1628"/>
<dbReference type="DNASU" id="3852790"/>
<dbReference type="EnsemblBacteria" id="ABC44360">
    <property type="protein sequence ID" value="ABC44360"/>
    <property type="gene ID" value="SRU_1628"/>
</dbReference>
<dbReference type="GeneID" id="83728546"/>
<dbReference type="KEGG" id="sru:SRU_1628"/>
<dbReference type="eggNOG" id="COG0806">
    <property type="taxonomic scope" value="Bacteria"/>
</dbReference>
<dbReference type="HOGENOM" id="CLU_077636_0_0_10"/>
<dbReference type="OrthoDB" id="9810331at2"/>
<dbReference type="Proteomes" id="UP000008674">
    <property type="component" value="Chromosome"/>
</dbReference>
<dbReference type="GO" id="GO:0005737">
    <property type="term" value="C:cytoplasm"/>
    <property type="evidence" value="ECO:0007669"/>
    <property type="project" value="UniProtKB-SubCell"/>
</dbReference>
<dbReference type="GO" id="GO:0005840">
    <property type="term" value="C:ribosome"/>
    <property type="evidence" value="ECO:0007669"/>
    <property type="project" value="InterPro"/>
</dbReference>
<dbReference type="GO" id="GO:0043022">
    <property type="term" value="F:ribosome binding"/>
    <property type="evidence" value="ECO:0007669"/>
    <property type="project" value="InterPro"/>
</dbReference>
<dbReference type="GO" id="GO:0042274">
    <property type="term" value="P:ribosomal small subunit biogenesis"/>
    <property type="evidence" value="ECO:0007669"/>
    <property type="project" value="UniProtKB-UniRule"/>
</dbReference>
<dbReference type="GO" id="GO:0006364">
    <property type="term" value="P:rRNA processing"/>
    <property type="evidence" value="ECO:0007669"/>
    <property type="project" value="UniProtKB-UniRule"/>
</dbReference>
<dbReference type="Gene3D" id="2.30.30.240">
    <property type="entry name" value="PRC-barrel domain"/>
    <property type="match status" value="1"/>
</dbReference>
<dbReference type="Gene3D" id="2.40.30.60">
    <property type="entry name" value="RimM"/>
    <property type="match status" value="1"/>
</dbReference>
<dbReference type="HAMAP" id="MF_00014">
    <property type="entry name" value="Ribosome_mat_RimM"/>
    <property type="match status" value="1"/>
</dbReference>
<dbReference type="InterPro" id="IPR011033">
    <property type="entry name" value="PRC_barrel-like_sf"/>
</dbReference>
<dbReference type="InterPro" id="IPR056792">
    <property type="entry name" value="PRC_RimM"/>
</dbReference>
<dbReference type="InterPro" id="IPR011961">
    <property type="entry name" value="RimM"/>
</dbReference>
<dbReference type="InterPro" id="IPR002676">
    <property type="entry name" value="RimM_N"/>
</dbReference>
<dbReference type="InterPro" id="IPR036976">
    <property type="entry name" value="RimM_N_sf"/>
</dbReference>
<dbReference type="InterPro" id="IPR009000">
    <property type="entry name" value="Transl_B-barrel_sf"/>
</dbReference>
<dbReference type="NCBIfam" id="TIGR02273">
    <property type="entry name" value="16S_RimM"/>
    <property type="match status" value="1"/>
</dbReference>
<dbReference type="PANTHER" id="PTHR33692">
    <property type="entry name" value="RIBOSOME MATURATION FACTOR RIMM"/>
    <property type="match status" value="1"/>
</dbReference>
<dbReference type="PANTHER" id="PTHR33692:SF1">
    <property type="entry name" value="RIBOSOME MATURATION FACTOR RIMM"/>
    <property type="match status" value="1"/>
</dbReference>
<dbReference type="Pfam" id="PF24986">
    <property type="entry name" value="PRC_RimM"/>
    <property type="match status" value="1"/>
</dbReference>
<dbReference type="Pfam" id="PF01782">
    <property type="entry name" value="RimM"/>
    <property type="match status" value="1"/>
</dbReference>
<dbReference type="SUPFAM" id="SSF50346">
    <property type="entry name" value="PRC-barrel domain"/>
    <property type="match status" value="1"/>
</dbReference>
<dbReference type="SUPFAM" id="SSF50447">
    <property type="entry name" value="Translation proteins"/>
    <property type="match status" value="1"/>
</dbReference>